<keyword id="KW-0143">Chaperone</keyword>
<keyword id="KW-0342">GTP-binding</keyword>
<keyword id="KW-0378">Hydrolase</keyword>
<keyword id="KW-0547">Nucleotide-binding</keyword>
<keyword id="KW-1185">Reference proteome</keyword>
<name>Y106_MYCTU</name>
<organism>
    <name type="scientific">Mycobacterium tuberculosis (strain ATCC 25618 / H37Rv)</name>
    <dbReference type="NCBI Taxonomy" id="83332"/>
    <lineage>
        <taxon>Bacteria</taxon>
        <taxon>Bacillati</taxon>
        <taxon>Actinomycetota</taxon>
        <taxon>Actinomycetes</taxon>
        <taxon>Mycobacteriales</taxon>
        <taxon>Mycobacteriaceae</taxon>
        <taxon>Mycobacterium</taxon>
        <taxon>Mycobacterium tuberculosis complex</taxon>
    </lineage>
</organism>
<proteinExistence type="evidence at protein level"/>
<accession>P9WPI5</accession>
<accession>L0T5P5</accession>
<accession>P64691</accession>
<accession>Q10899</accession>
<comment type="function">
    <text evidence="2">Zinc chaperone that directly transfers zinc cofactor to target proteins, thereby activating them. Zinc is transferred from the CXCC motif in the GTPase domain to the zinc binding site in target proteins in a process requiring GTP hydrolysis.</text>
</comment>
<comment type="catalytic activity">
    <reaction evidence="1">
        <text>GTP + H2O = GDP + phosphate + H(+)</text>
        <dbReference type="Rhea" id="RHEA:19669"/>
        <dbReference type="ChEBI" id="CHEBI:15377"/>
        <dbReference type="ChEBI" id="CHEBI:15378"/>
        <dbReference type="ChEBI" id="CHEBI:37565"/>
        <dbReference type="ChEBI" id="CHEBI:43474"/>
        <dbReference type="ChEBI" id="CHEBI:58189"/>
    </reaction>
    <physiologicalReaction direction="left-to-right" evidence="1">
        <dbReference type="Rhea" id="RHEA:19670"/>
    </physiologicalReaction>
</comment>
<comment type="similarity">
    <text evidence="4">Belongs to the SIMIBI class G3E GTPase family. ZNG1 subfamily.</text>
</comment>
<sequence>MRTPVILVAGQDHTDEVTGALLRRTGTVVVEHRFDGHVVRRMTATLSRGELITTEDALEFAHGCVSCTIRDDLLVLLRRLHRRDNVGRIVVHLAPWLEPQPICWAIDHVRVCVGHGYPDGPAALDVRVAAVVTCVDCVRWLPQSLGEDELPDGRTVAQVTVGQAEFADLLVLTHPEPVAVAVLRRLAPRARITGGVDRVELALAHLDDNSRRGRTDTPHTPLLAGLPPLAADGEVAIVEFSARRPFHPQRLHAAVDLLLDGVVRTRGRLWLANRPDQVMWLESAGGGLRVASAGKWLAAMAASEVAYVDLERRLFADLMWVYPFGDRHTAMTVLVCGADPTDIVNALNAALLSDDEMASPQRWQSYVDPFGDWHDDPCHEMPDAAGEFSAHRNSGESR</sequence>
<dbReference type="EC" id="3.6.5.-" evidence="1"/>
<dbReference type="EMBL" id="AL123456">
    <property type="protein sequence ID" value="CCP42831.1"/>
    <property type="molecule type" value="Genomic_DNA"/>
</dbReference>
<dbReference type="PIR" id="B70752">
    <property type="entry name" value="B70752"/>
</dbReference>
<dbReference type="RefSeq" id="NP_214620.1">
    <property type="nucleotide sequence ID" value="NC_000962.3"/>
</dbReference>
<dbReference type="STRING" id="83332.Rv0106"/>
<dbReference type="PaxDb" id="83332-Rv0106"/>
<dbReference type="DNASU" id="886919"/>
<dbReference type="GeneID" id="886919"/>
<dbReference type="KEGG" id="mtu:Rv0106"/>
<dbReference type="KEGG" id="mtv:RVBD_0106"/>
<dbReference type="TubercuList" id="Rv0106"/>
<dbReference type="eggNOG" id="COG0523">
    <property type="taxonomic scope" value="Bacteria"/>
</dbReference>
<dbReference type="InParanoid" id="P9WPI5"/>
<dbReference type="OrthoDB" id="9808822at2"/>
<dbReference type="PhylomeDB" id="P9WPI5"/>
<dbReference type="Proteomes" id="UP000001584">
    <property type="component" value="Chromosome"/>
</dbReference>
<dbReference type="GO" id="GO:0005525">
    <property type="term" value="F:GTP binding"/>
    <property type="evidence" value="ECO:0007669"/>
    <property type="project" value="UniProtKB-KW"/>
</dbReference>
<dbReference type="GO" id="GO:0016787">
    <property type="term" value="F:hydrolase activity"/>
    <property type="evidence" value="ECO:0007669"/>
    <property type="project" value="UniProtKB-KW"/>
</dbReference>
<dbReference type="Gene3D" id="3.40.50.300">
    <property type="entry name" value="P-loop containing nucleotide triphosphate hydrolases"/>
    <property type="match status" value="1"/>
</dbReference>
<dbReference type="InterPro" id="IPR011629">
    <property type="entry name" value="CobW-like_C"/>
</dbReference>
<dbReference type="InterPro" id="IPR003495">
    <property type="entry name" value="CobW/HypB/UreG_nucleotide-bd"/>
</dbReference>
<dbReference type="InterPro" id="IPR027417">
    <property type="entry name" value="P-loop_NTPase"/>
</dbReference>
<dbReference type="InterPro" id="IPR051927">
    <property type="entry name" value="Zn_Chap_cDPG_Synth"/>
</dbReference>
<dbReference type="NCBIfam" id="NF047431">
    <property type="entry name" value="hiber_recruit"/>
    <property type="match status" value="1"/>
</dbReference>
<dbReference type="PANTHER" id="PTHR43603">
    <property type="entry name" value="COBW DOMAIN-CONTAINING PROTEIN DDB_G0274527"/>
    <property type="match status" value="1"/>
</dbReference>
<dbReference type="PANTHER" id="PTHR43603:SF1">
    <property type="entry name" value="ZINC-REGULATED GTPASE METALLOPROTEIN ACTIVATOR 1"/>
    <property type="match status" value="1"/>
</dbReference>
<dbReference type="Pfam" id="PF02492">
    <property type="entry name" value="cobW"/>
    <property type="match status" value="1"/>
</dbReference>
<dbReference type="Pfam" id="PF07683">
    <property type="entry name" value="CobW_C"/>
    <property type="match status" value="1"/>
</dbReference>
<dbReference type="SMART" id="SM00833">
    <property type="entry name" value="CobW_C"/>
    <property type="match status" value="1"/>
</dbReference>
<dbReference type="SUPFAM" id="SSF90002">
    <property type="entry name" value="Hypothetical protein YjiA, C-terminal domain"/>
    <property type="match status" value="1"/>
</dbReference>
<evidence type="ECO:0000250" key="1">
    <source>
        <dbReference type="UniProtKB" id="P24203"/>
    </source>
</evidence>
<evidence type="ECO:0000250" key="2">
    <source>
        <dbReference type="UniProtKB" id="Q8VEH6"/>
    </source>
</evidence>
<evidence type="ECO:0000255" key="3"/>
<evidence type="ECO:0000305" key="4"/>
<reference key="1">
    <citation type="journal article" date="1998" name="Nature">
        <title>Deciphering the biology of Mycobacterium tuberculosis from the complete genome sequence.</title>
        <authorList>
            <person name="Cole S.T."/>
            <person name="Brosch R."/>
            <person name="Parkhill J."/>
            <person name="Garnier T."/>
            <person name="Churcher C.M."/>
            <person name="Harris D.E."/>
            <person name="Gordon S.V."/>
            <person name="Eiglmeier K."/>
            <person name="Gas S."/>
            <person name="Barry C.E. III"/>
            <person name="Tekaia F."/>
            <person name="Badcock K."/>
            <person name="Basham D."/>
            <person name="Brown D."/>
            <person name="Chillingworth T."/>
            <person name="Connor R."/>
            <person name="Davies R.M."/>
            <person name="Devlin K."/>
            <person name="Feltwell T."/>
            <person name="Gentles S."/>
            <person name="Hamlin N."/>
            <person name="Holroyd S."/>
            <person name="Hornsby T."/>
            <person name="Jagels K."/>
            <person name="Krogh A."/>
            <person name="McLean J."/>
            <person name="Moule S."/>
            <person name="Murphy L.D."/>
            <person name="Oliver S."/>
            <person name="Osborne J."/>
            <person name="Quail M.A."/>
            <person name="Rajandream M.A."/>
            <person name="Rogers J."/>
            <person name="Rutter S."/>
            <person name="Seeger K."/>
            <person name="Skelton S."/>
            <person name="Squares S."/>
            <person name="Squares R."/>
            <person name="Sulston J.E."/>
            <person name="Taylor K."/>
            <person name="Whitehead S."/>
            <person name="Barrell B.G."/>
        </authorList>
    </citation>
    <scope>NUCLEOTIDE SEQUENCE [LARGE SCALE GENOMIC DNA]</scope>
    <source>
        <strain>ATCC 25618 / H37Rv</strain>
    </source>
</reference>
<reference key="2">
    <citation type="journal article" date="2011" name="Mol. Cell. Proteomics">
        <title>Proteogenomic analysis of Mycobacterium tuberculosis by high resolution mass spectrometry.</title>
        <authorList>
            <person name="Kelkar D.S."/>
            <person name="Kumar D."/>
            <person name="Kumar P."/>
            <person name="Balakrishnan L."/>
            <person name="Muthusamy B."/>
            <person name="Yadav A.K."/>
            <person name="Shrivastava P."/>
            <person name="Marimuthu A."/>
            <person name="Anand S."/>
            <person name="Sundaram H."/>
            <person name="Kingsbury R."/>
            <person name="Harsha H.C."/>
            <person name="Nair B."/>
            <person name="Prasad T.S."/>
            <person name="Chauhan D.S."/>
            <person name="Katoch K."/>
            <person name="Katoch V.M."/>
            <person name="Kumar P."/>
            <person name="Chaerkady R."/>
            <person name="Ramachandran S."/>
            <person name="Dash D."/>
            <person name="Pandey A."/>
        </authorList>
    </citation>
    <scope>IDENTIFICATION BY MASS SPECTROMETRY [LARGE SCALE ANALYSIS]</scope>
    <source>
        <strain>ATCC 25618 / H37Rv</strain>
    </source>
</reference>
<protein>
    <recommendedName>
        <fullName>Zinc chaperone Rv0106</fullName>
        <ecNumber evidence="1">3.6.5.-</ecNumber>
    </recommendedName>
</protein>
<feature type="chain" id="PRO_0000103676" description="Zinc chaperone Rv0106">
    <location>
        <begin position="1"/>
        <end position="398"/>
    </location>
</feature>
<feature type="domain" description="CobW C-terminal">
    <location>
        <begin position="235"/>
        <end position="351"/>
    </location>
</feature>
<feature type="short sequence motif" description="CXCC motif" evidence="3">
    <location>
        <begin position="64"/>
        <end position="67"/>
    </location>
</feature>
<feature type="binding site" evidence="3">
    <location>
        <begin position="10"/>
        <end position="14"/>
    </location>
    <ligand>
        <name>GTP</name>
        <dbReference type="ChEBI" id="CHEBI:37565"/>
    </ligand>
</feature>
<feature type="binding site" evidence="3">
    <location>
        <begin position="67"/>
        <end position="71"/>
    </location>
    <ligand>
        <name>GTP</name>
        <dbReference type="ChEBI" id="CHEBI:37565"/>
    </ligand>
</feature>
<gene>
    <name type="ordered locus">Rv0106</name>
    <name type="ORF">MTCY251.25</name>
</gene>